<name>RR7_WELMI</name>
<comment type="function">
    <text evidence="1">One of the primary rRNA binding proteins, it binds directly to 16S rRNA where it nucleates assembly of the head domain of the 30S subunit.</text>
</comment>
<comment type="subunit">
    <text evidence="1">Part of the 30S ribosomal subunit.</text>
</comment>
<comment type="subcellular location">
    <subcellularLocation>
        <location>Plastid</location>
        <location>Chloroplast</location>
    </subcellularLocation>
</comment>
<comment type="similarity">
    <text evidence="3">Belongs to the universal ribosomal protein uS7 family.</text>
</comment>
<organism>
    <name type="scientific">Welwitschia mirabilis</name>
    <name type="common">Tree tumbo</name>
    <name type="synonym">Welwitschia bainesii</name>
    <dbReference type="NCBI Taxonomy" id="3377"/>
    <lineage>
        <taxon>Eukaryota</taxon>
        <taxon>Viridiplantae</taxon>
        <taxon>Streptophyta</taxon>
        <taxon>Embryophyta</taxon>
        <taxon>Tracheophyta</taxon>
        <taxon>Spermatophyta</taxon>
        <taxon>Gnetopsida</taxon>
        <taxon>Gnetidae</taxon>
        <taxon>Welwitschiales</taxon>
        <taxon>Welwitschiaceae</taxon>
        <taxon>Welwitschia</taxon>
    </lineage>
</organism>
<evidence type="ECO:0000250" key="1"/>
<evidence type="ECO:0000255" key="2">
    <source>
        <dbReference type="HAMAP-Rule" id="MF_00480"/>
    </source>
</evidence>
<evidence type="ECO:0000305" key="3"/>
<sequence length="157" mass="18253">MSRRNTAKKTKRTEKSDPIYQSRLVNMVLNRIIKHGKKSLAYRILYRAMKQIQQKTEKNPLLVLRQAIKEVTPRLIVKSRRKSGSTYQVPFEIKPNQGKILAIRWLLEASRKRLGPNMESKFSSELIDATKGKGKAIRKKEETHKMAEANRAFADYL</sequence>
<gene>
    <name type="primary">rps7-A</name>
</gene>
<gene>
    <name type="primary">rps7-B</name>
</gene>
<dbReference type="EMBL" id="EU342371">
    <property type="protein sequence ID" value="ABY26833.1"/>
    <property type="molecule type" value="Genomic_DNA"/>
</dbReference>
<dbReference type="EMBL" id="EU342371">
    <property type="protein sequence ID" value="ABY26841.1"/>
    <property type="molecule type" value="Genomic_DNA"/>
</dbReference>
<dbReference type="EMBL" id="AP009568">
    <property type="protein sequence ID" value="BAH11178.1"/>
    <property type="molecule type" value="Genomic_DNA"/>
</dbReference>
<dbReference type="EMBL" id="AP009568">
    <property type="protein sequence ID" value="BAH11185.1"/>
    <property type="molecule type" value="Genomic_DNA"/>
</dbReference>
<dbReference type="SMR" id="B2Y203"/>
<dbReference type="GO" id="GO:0009507">
    <property type="term" value="C:chloroplast"/>
    <property type="evidence" value="ECO:0007669"/>
    <property type="project" value="UniProtKB-SubCell"/>
</dbReference>
<dbReference type="GO" id="GO:0015935">
    <property type="term" value="C:small ribosomal subunit"/>
    <property type="evidence" value="ECO:0007669"/>
    <property type="project" value="InterPro"/>
</dbReference>
<dbReference type="GO" id="GO:0019843">
    <property type="term" value="F:rRNA binding"/>
    <property type="evidence" value="ECO:0007669"/>
    <property type="project" value="UniProtKB-UniRule"/>
</dbReference>
<dbReference type="GO" id="GO:0003735">
    <property type="term" value="F:structural constituent of ribosome"/>
    <property type="evidence" value="ECO:0007669"/>
    <property type="project" value="InterPro"/>
</dbReference>
<dbReference type="GO" id="GO:0006412">
    <property type="term" value="P:translation"/>
    <property type="evidence" value="ECO:0007669"/>
    <property type="project" value="UniProtKB-UniRule"/>
</dbReference>
<dbReference type="CDD" id="cd14871">
    <property type="entry name" value="uS7_Chloroplast"/>
    <property type="match status" value="1"/>
</dbReference>
<dbReference type="FunFam" id="1.10.455.10:FF:000001">
    <property type="entry name" value="30S ribosomal protein S7"/>
    <property type="match status" value="1"/>
</dbReference>
<dbReference type="Gene3D" id="1.10.455.10">
    <property type="entry name" value="Ribosomal protein S7 domain"/>
    <property type="match status" value="1"/>
</dbReference>
<dbReference type="HAMAP" id="MF_00480_B">
    <property type="entry name" value="Ribosomal_uS7_B"/>
    <property type="match status" value="1"/>
</dbReference>
<dbReference type="InterPro" id="IPR000235">
    <property type="entry name" value="Ribosomal_uS7"/>
</dbReference>
<dbReference type="InterPro" id="IPR005717">
    <property type="entry name" value="Ribosomal_uS7_bac/org-type"/>
</dbReference>
<dbReference type="InterPro" id="IPR020606">
    <property type="entry name" value="Ribosomal_uS7_CS"/>
</dbReference>
<dbReference type="InterPro" id="IPR023798">
    <property type="entry name" value="Ribosomal_uS7_dom"/>
</dbReference>
<dbReference type="InterPro" id="IPR036823">
    <property type="entry name" value="Ribosomal_uS7_dom_sf"/>
</dbReference>
<dbReference type="NCBIfam" id="TIGR01029">
    <property type="entry name" value="rpsG_bact"/>
    <property type="match status" value="1"/>
</dbReference>
<dbReference type="PANTHER" id="PTHR11205">
    <property type="entry name" value="RIBOSOMAL PROTEIN S7"/>
    <property type="match status" value="1"/>
</dbReference>
<dbReference type="Pfam" id="PF00177">
    <property type="entry name" value="Ribosomal_S7"/>
    <property type="match status" value="1"/>
</dbReference>
<dbReference type="PIRSF" id="PIRSF002122">
    <property type="entry name" value="RPS7p_RPS7a_RPS5e_RPS7o"/>
    <property type="match status" value="1"/>
</dbReference>
<dbReference type="SUPFAM" id="SSF47973">
    <property type="entry name" value="Ribosomal protein S7"/>
    <property type="match status" value="1"/>
</dbReference>
<dbReference type="PROSITE" id="PS00052">
    <property type="entry name" value="RIBOSOMAL_S7"/>
    <property type="match status" value="1"/>
</dbReference>
<proteinExistence type="inferred from homology"/>
<reference key="1">
    <citation type="journal article" date="2008" name="BMC Evol. Biol.">
        <title>The complete plastid genome sequence of Welwitschia mirabilis: an unusually compact plastome with accelerated divergence rates.</title>
        <authorList>
            <person name="McCoy S.R."/>
            <person name="Kuehl J.V."/>
            <person name="Boore J.L."/>
            <person name="Raubeson L.A."/>
        </authorList>
    </citation>
    <scope>NUCLEOTIDE SEQUENCE [LARGE SCALE GENOMIC DNA]</scope>
</reference>
<reference key="2">
    <citation type="journal article" date="2009" name="Mol. Phylogenet. Evol.">
        <title>Evolution of reduced and compact chloroplast genomes (cpDNAs) in gnetophytes: Selection toward a lower-cost strategy.</title>
        <authorList>
            <person name="Wu C.-S."/>
            <person name="Lai Y.-T."/>
            <person name="Lin C.-P."/>
            <person name="Wang Y.-N."/>
            <person name="Chaw S.-M."/>
        </authorList>
    </citation>
    <scope>NUCLEOTIDE SEQUENCE [LARGE SCALE GENOMIC DNA]</scope>
</reference>
<accession>B2Y203</accession>
<feature type="chain" id="PRO_1000135569" description="Small ribosomal subunit protein uS7cz/uS7cy">
    <location>
        <begin position="1"/>
        <end position="157"/>
    </location>
</feature>
<protein>
    <recommendedName>
        <fullName evidence="2">Small ribosomal subunit protein uS7cz/uS7cy</fullName>
    </recommendedName>
    <alternativeName>
        <fullName>30S ribosomal protein S7, chloroplastic</fullName>
    </alternativeName>
</protein>
<geneLocation type="chloroplast"/>
<keyword id="KW-0150">Chloroplast</keyword>
<keyword id="KW-0934">Plastid</keyword>
<keyword id="KW-0687">Ribonucleoprotein</keyword>
<keyword id="KW-0689">Ribosomal protein</keyword>
<keyword id="KW-0694">RNA-binding</keyword>
<keyword id="KW-0699">rRNA-binding</keyword>